<sequence length="134" mass="15122">MILACDVGLKRIGIAALLNGVILPLEAILRHNRNQASRDLSDLLRKKDIQVLVVGKPNESYADTHARIEHFIKLVDFKGEIVFINEDNSSVEAYENLEHLGKKNKRIATKDGRLDSLSACRILERYCQQVLKKG</sequence>
<feature type="chain" id="PRO_0000172074" description="Putative pre-16S rRNA nuclease">
    <location>
        <begin position="1"/>
        <end position="134"/>
    </location>
</feature>
<name>YQGF_HELPJ</name>
<keyword id="KW-0963">Cytoplasm</keyword>
<keyword id="KW-0378">Hydrolase</keyword>
<keyword id="KW-0540">Nuclease</keyword>
<keyword id="KW-0690">Ribosome biogenesis</keyword>
<evidence type="ECO:0000255" key="1">
    <source>
        <dbReference type="HAMAP-Rule" id="MF_00651"/>
    </source>
</evidence>
<dbReference type="EC" id="3.1.-.-" evidence="1"/>
<dbReference type="EMBL" id="AE001439">
    <property type="protein sequence ID" value="AAD05908.1"/>
    <property type="molecule type" value="Genomic_DNA"/>
</dbReference>
<dbReference type="PIR" id="E71945">
    <property type="entry name" value="E71945"/>
</dbReference>
<dbReference type="RefSeq" id="WP_000599187.1">
    <property type="nucleotide sequence ID" value="NC_000921.1"/>
</dbReference>
<dbReference type="SMR" id="Q9ZMA5"/>
<dbReference type="KEGG" id="hpj:jhp_0317"/>
<dbReference type="PATRIC" id="fig|85963.30.peg.696"/>
<dbReference type="eggNOG" id="COG0816">
    <property type="taxonomic scope" value="Bacteria"/>
</dbReference>
<dbReference type="Proteomes" id="UP000000804">
    <property type="component" value="Chromosome"/>
</dbReference>
<dbReference type="GO" id="GO:0005829">
    <property type="term" value="C:cytosol"/>
    <property type="evidence" value="ECO:0007669"/>
    <property type="project" value="TreeGrafter"/>
</dbReference>
<dbReference type="GO" id="GO:0004518">
    <property type="term" value="F:nuclease activity"/>
    <property type="evidence" value="ECO:0007669"/>
    <property type="project" value="UniProtKB-KW"/>
</dbReference>
<dbReference type="GO" id="GO:0000967">
    <property type="term" value="P:rRNA 5'-end processing"/>
    <property type="evidence" value="ECO:0007669"/>
    <property type="project" value="UniProtKB-UniRule"/>
</dbReference>
<dbReference type="CDD" id="cd16964">
    <property type="entry name" value="YqgF"/>
    <property type="match status" value="1"/>
</dbReference>
<dbReference type="FunFam" id="3.30.420.140:FF:000013">
    <property type="entry name" value="Putative pre-16S rRNA nuclease"/>
    <property type="match status" value="1"/>
</dbReference>
<dbReference type="Gene3D" id="3.30.420.140">
    <property type="entry name" value="YqgF/RNase H-like domain"/>
    <property type="match status" value="1"/>
</dbReference>
<dbReference type="HAMAP" id="MF_00651">
    <property type="entry name" value="Nuclease_YqgF"/>
    <property type="match status" value="1"/>
</dbReference>
<dbReference type="InterPro" id="IPR012337">
    <property type="entry name" value="RNaseH-like_sf"/>
</dbReference>
<dbReference type="InterPro" id="IPR005227">
    <property type="entry name" value="YqgF"/>
</dbReference>
<dbReference type="InterPro" id="IPR006641">
    <property type="entry name" value="YqgF/RNaseH-like_dom"/>
</dbReference>
<dbReference type="InterPro" id="IPR037027">
    <property type="entry name" value="YqgF/RNaseH-like_dom_sf"/>
</dbReference>
<dbReference type="NCBIfam" id="NF001026">
    <property type="entry name" value="PRK00109.2-2"/>
    <property type="match status" value="1"/>
</dbReference>
<dbReference type="PANTHER" id="PTHR33317">
    <property type="entry name" value="POLYNUCLEOTIDYL TRANSFERASE, RIBONUCLEASE H-LIKE SUPERFAMILY PROTEIN"/>
    <property type="match status" value="1"/>
</dbReference>
<dbReference type="PANTHER" id="PTHR33317:SF4">
    <property type="entry name" value="POLYNUCLEOTIDYL TRANSFERASE, RIBONUCLEASE H-LIKE SUPERFAMILY PROTEIN"/>
    <property type="match status" value="1"/>
</dbReference>
<dbReference type="Pfam" id="PF03652">
    <property type="entry name" value="RuvX"/>
    <property type="match status" value="1"/>
</dbReference>
<dbReference type="SMART" id="SM00732">
    <property type="entry name" value="YqgFc"/>
    <property type="match status" value="1"/>
</dbReference>
<dbReference type="SUPFAM" id="SSF53098">
    <property type="entry name" value="Ribonuclease H-like"/>
    <property type="match status" value="1"/>
</dbReference>
<accession>Q9ZMA5</accession>
<organism>
    <name type="scientific">Helicobacter pylori (strain J99 / ATCC 700824)</name>
    <name type="common">Campylobacter pylori J99</name>
    <dbReference type="NCBI Taxonomy" id="85963"/>
    <lineage>
        <taxon>Bacteria</taxon>
        <taxon>Pseudomonadati</taxon>
        <taxon>Campylobacterota</taxon>
        <taxon>Epsilonproteobacteria</taxon>
        <taxon>Campylobacterales</taxon>
        <taxon>Helicobacteraceae</taxon>
        <taxon>Helicobacter</taxon>
    </lineage>
</organism>
<comment type="function">
    <text evidence="1">Could be a nuclease involved in processing of the 5'-end of pre-16S rRNA.</text>
</comment>
<comment type="subcellular location">
    <subcellularLocation>
        <location evidence="1">Cytoplasm</location>
    </subcellularLocation>
</comment>
<comment type="similarity">
    <text evidence="1">Belongs to the YqgF nuclease family.</text>
</comment>
<gene>
    <name type="ordered locus">jhp_0317</name>
</gene>
<protein>
    <recommendedName>
        <fullName evidence="1">Putative pre-16S rRNA nuclease</fullName>
        <ecNumber evidence="1">3.1.-.-</ecNumber>
    </recommendedName>
</protein>
<reference key="1">
    <citation type="journal article" date="1999" name="Nature">
        <title>Genomic sequence comparison of two unrelated isolates of the human gastric pathogen Helicobacter pylori.</title>
        <authorList>
            <person name="Alm R.A."/>
            <person name="Ling L.-S.L."/>
            <person name="Moir D.T."/>
            <person name="King B.L."/>
            <person name="Brown E.D."/>
            <person name="Doig P.C."/>
            <person name="Smith D.R."/>
            <person name="Noonan B."/>
            <person name="Guild B.C."/>
            <person name="deJonge B.L."/>
            <person name="Carmel G."/>
            <person name="Tummino P.J."/>
            <person name="Caruso A."/>
            <person name="Uria-Nickelsen M."/>
            <person name="Mills D.M."/>
            <person name="Ives C."/>
            <person name="Gibson R."/>
            <person name="Merberg D."/>
            <person name="Mills S.D."/>
            <person name="Jiang Q."/>
            <person name="Taylor D.E."/>
            <person name="Vovis G.F."/>
            <person name="Trust T.J."/>
        </authorList>
    </citation>
    <scope>NUCLEOTIDE SEQUENCE [LARGE SCALE GENOMIC DNA]</scope>
    <source>
        <strain>J99 / ATCC 700824</strain>
    </source>
</reference>
<proteinExistence type="inferred from homology"/>